<gene>
    <name type="primary">IRC6</name>
    <name type="ORF">AWRI1631_61090</name>
</gene>
<reference key="1">
    <citation type="journal article" date="2008" name="FEMS Yeast Res.">
        <title>Comparative genome analysis of a Saccharomyces cerevisiae wine strain.</title>
        <authorList>
            <person name="Borneman A.R."/>
            <person name="Forgan A.H."/>
            <person name="Pretorius I.S."/>
            <person name="Chambers P.J."/>
        </authorList>
    </citation>
    <scope>NUCLEOTIDE SEQUENCE [LARGE SCALE GENOMIC DNA]</scope>
    <source>
        <strain>AWRI1631</strain>
    </source>
</reference>
<keyword id="KW-0160">Chromosomal rearrangement</keyword>
<feature type="chain" id="PRO_0000399228" description="Increased recombination centers protein 6">
    <location>
        <begin position="1"/>
        <end position="237"/>
    </location>
</feature>
<protein>
    <recommendedName>
        <fullName>Increased recombination centers protein 6</fullName>
    </recommendedName>
</protein>
<name>IRC6_YEAS6</name>
<comment type="function">
    <text evidence="1">Involved in gross chromosomal rearrangements (GCRs) and telomere healing.</text>
</comment>
<comment type="similarity">
    <text evidence="2">Belongs to the IRC6 family.</text>
</comment>
<accession>B5VI68</accession>
<proteinExistence type="inferred from homology"/>
<dbReference type="EMBL" id="ABSV01000794">
    <property type="protein sequence ID" value="EDZ72375.1"/>
    <property type="molecule type" value="Genomic_DNA"/>
</dbReference>
<dbReference type="SMR" id="B5VI68"/>
<dbReference type="OrthoDB" id="39866at4893"/>
<dbReference type="Proteomes" id="UP000008988">
    <property type="component" value="Unassembled WGS sequence"/>
</dbReference>
<dbReference type="GO" id="GO:0030674">
    <property type="term" value="F:protein-macromolecule adaptor activity"/>
    <property type="evidence" value="ECO:0007669"/>
    <property type="project" value="TreeGrafter"/>
</dbReference>
<dbReference type="GO" id="GO:0016192">
    <property type="term" value="P:vesicle-mediated transport"/>
    <property type="evidence" value="ECO:0007669"/>
    <property type="project" value="InterPro"/>
</dbReference>
<dbReference type="Gene3D" id="3.40.50.11960">
    <property type="match status" value="1"/>
</dbReference>
<dbReference type="InterPro" id="IPR034627">
    <property type="entry name" value="Irc6"/>
</dbReference>
<dbReference type="PANTHER" id="PTHR28043">
    <property type="entry name" value="INCREASED RECOMBINATION CENTERS PROTEIN 6"/>
    <property type="match status" value="1"/>
</dbReference>
<dbReference type="PANTHER" id="PTHR28043:SF1">
    <property type="entry name" value="INCREASED RECOMBINATION CENTERS PROTEIN 6"/>
    <property type="match status" value="1"/>
</dbReference>
<organism>
    <name type="scientific">Saccharomyces cerevisiae (strain AWRI1631)</name>
    <name type="common">Baker's yeast</name>
    <dbReference type="NCBI Taxonomy" id="545124"/>
    <lineage>
        <taxon>Eukaryota</taxon>
        <taxon>Fungi</taxon>
        <taxon>Dikarya</taxon>
        <taxon>Ascomycota</taxon>
        <taxon>Saccharomycotina</taxon>
        <taxon>Saccharomycetes</taxon>
        <taxon>Saccharomycetales</taxon>
        <taxon>Saccharomycetaceae</taxon>
        <taxon>Saccharomyces</taxon>
    </lineage>
</organism>
<evidence type="ECO:0000250" key="1"/>
<evidence type="ECO:0000305" key="2"/>
<sequence length="237" mass="27818">MVLQYPQNKILVLSDHPHNFSKTQFLQDLFHCSSTGISIVKDQTWENRYYKVHFDLYIDSCKDIPVWVEEFITPECEPLRNVMAGIILITDIRQTKPQELLHQFMIAAHRNTFVVLVNVNEEVEQDEIDELNEIWSNAFTNVIELVNWKRSKPTVNHNDYGEKLGLDRIQEIIDTHDWLNCEVLPATKIREEIPNEMPLEQIIRNLQSARLKYKSIENSSEADAFANEMADELSRYL</sequence>